<evidence type="ECO:0000250" key="1"/>
<evidence type="ECO:0000255" key="2"/>
<evidence type="ECO:0000305" key="3"/>
<feature type="chain" id="PRO_0000360949" description="NAD(P)H-quinone oxidoreductase subunit 5, chloroplastic">
    <location>
        <begin position="1"/>
        <end position="754"/>
    </location>
</feature>
<feature type="transmembrane region" description="Helical" evidence="2">
    <location>
        <begin position="8"/>
        <end position="28"/>
    </location>
</feature>
<feature type="transmembrane region" description="Helical" evidence="2">
    <location>
        <begin position="40"/>
        <end position="60"/>
    </location>
</feature>
<feature type="transmembrane region" description="Helical" evidence="2">
    <location>
        <begin position="89"/>
        <end position="109"/>
    </location>
</feature>
<feature type="transmembrane region" description="Helical" evidence="2">
    <location>
        <begin position="125"/>
        <end position="145"/>
    </location>
</feature>
<feature type="transmembrane region" description="Helical" evidence="2">
    <location>
        <begin position="147"/>
        <end position="167"/>
    </location>
</feature>
<feature type="transmembrane region" description="Helical" evidence="2">
    <location>
        <begin position="185"/>
        <end position="205"/>
    </location>
</feature>
<feature type="transmembrane region" description="Helical" evidence="2">
    <location>
        <begin position="219"/>
        <end position="239"/>
    </location>
</feature>
<feature type="transmembrane region" description="Helical" evidence="2">
    <location>
        <begin position="258"/>
        <end position="278"/>
    </location>
</feature>
<feature type="transmembrane region" description="Helical" evidence="2">
    <location>
        <begin position="280"/>
        <end position="300"/>
    </location>
</feature>
<feature type="transmembrane region" description="Helical" evidence="2">
    <location>
        <begin position="327"/>
        <end position="347"/>
    </location>
</feature>
<feature type="transmembrane region" description="Helical" evidence="2">
    <location>
        <begin position="354"/>
        <end position="374"/>
    </location>
</feature>
<feature type="transmembrane region" description="Helical" evidence="2">
    <location>
        <begin position="396"/>
        <end position="416"/>
    </location>
</feature>
<feature type="transmembrane region" description="Helical" evidence="2">
    <location>
        <begin position="425"/>
        <end position="445"/>
    </location>
</feature>
<feature type="transmembrane region" description="Helical" evidence="2">
    <location>
        <begin position="552"/>
        <end position="572"/>
    </location>
</feature>
<feature type="transmembrane region" description="Helical" evidence="2">
    <location>
        <begin position="608"/>
        <end position="628"/>
    </location>
</feature>
<feature type="transmembrane region" description="Helical" evidence="2">
    <location>
        <begin position="733"/>
        <end position="753"/>
    </location>
</feature>
<name>NU5C_MORIN</name>
<sequence length="754" mass="85750">MEYIYQYFWIITFISLPVPILIGVGLLLFPTATKSLRRMWVFPSVLLLSIIMLFSTYLAIQQVNNPSIYLSIWSWTINNDFSLEFGYLVDPLTSIMLILITTVGILVLIYSDNYMSHDQGYLRFFAYMSFFNTSMVGLVTSSNLIQIYFFWELVGMCSYLLIGFWFTRPTAANACQKAFVTNRVGDFGLLLGILGFYWITGSLEFRDLFEIFNNLVYNNEVNLLFATLCAFLLFAGAIAKSAQFPLHVWLPDAMEGPTPISALIHAATMVAAGIFLGARLLPLFIVMPYIMNLIALLGIITLLLGATLAFAQKDIKRGLAYSTMSQLGYMMLALGMGSYRAALFHLITHAYSKALLFLGSGSIIHSMESIVGYSPDKSQNLVLMGGLKKHVPITKTSFLLGTLSLCGIPPLGCFWSKDEILNDSWLYSPIFAIIAFSTAGLTAFYMFRIYLLTFEGHLNLYFQTYSGKKRSSVYSISLWGREEQKWIKTKFRLLPLLTMNNNKKTSFFFKKKYLINRNVRNLRGPIITIPNPNFGTKNSFSYPHESENTMLFSMLVLGLFTLFIGIIGIPFFNQEGIQLDILTKLLTPSINLLYQNKKNLMDWDWYEFITNATYSVSIASFGILIASFLYNPGYSSLQNFNLFNSFVKGISKKLKFFEDKIINVTYDWSYNRGYIDFFYATFLIQGIRILSELIHFFDRQVIDGITNGVGISSFFVGEGIKYVGVGRISSYLLVYISYVLIFLLIYSRGVLFFL</sequence>
<proteinExistence type="inferred from homology"/>
<keyword id="KW-0150">Chloroplast</keyword>
<keyword id="KW-0472">Membrane</keyword>
<keyword id="KW-0520">NAD</keyword>
<keyword id="KW-0521">NADP</keyword>
<keyword id="KW-0934">Plastid</keyword>
<keyword id="KW-0618">Plastoquinone</keyword>
<keyword id="KW-0874">Quinone</keyword>
<keyword id="KW-0793">Thylakoid</keyword>
<keyword id="KW-1278">Translocase</keyword>
<keyword id="KW-0812">Transmembrane</keyword>
<keyword id="KW-1133">Transmembrane helix</keyword>
<keyword id="KW-0813">Transport</keyword>
<dbReference type="EC" id="7.1.1.-"/>
<dbReference type="EMBL" id="DQ226511">
    <property type="protein sequence ID" value="ABB21003.1"/>
    <property type="molecule type" value="Genomic_DNA"/>
</dbReference>
<dbReference type="RefSeq" id="YP_762307.1">
    <property type="nucleotide sequence ID" value="NC_008359.1"/>
</dbReference>
<dbReference type="SMR" id="Q09WX1"/>
<dbReference type="GeneID" id="4290603"/>
<dbReference type="GO" id="GO:0009535">
    <property type="term" value="C:chloroplast thylakoid membrane"/>
    <property type="evidence" value="ECO:0007669"/>
    <property type="project" value="UniProtKB-SubCell"/>
</dbReference>
<dbReference type="GO" id="GO:0008137">
    <property type="term" value="F:NADH dehydrogenase (ubiquinone) activity"/>
    <property type="evidence" value="ECO:0007669"/>
    <property type="project" value="InterPro"/>
</dbReference>
<dbReference type="GO" id="GO:0048038">
    <property type="term" value="F:quinone binding"/>
    <property type="evidence" value="ECO:0007669"/>
    <property type="project" value="UniProtKB-KW"/>
</dbReference>
<dbReference type="GO" id="GO:0042773">
    <property type="term" value="P:ATP synthesis coupled electron transport"/>
    <property type="evidence" value="ECO:0007669"/>
    <property type="project" value="InterPro"/>
</dbReference>
<dbReference type="GO" id="GO:0015990">
    <property type="term" value="P:electron transport coupled proton transport"/>
    <property type="evidence" value="ECO:0007669"/>
    <property type="project" value="TreeGrafter"/>
</dbReference>
<dbReference type="Gene3D" id="1.20.5.2700">
    <property type="match status" value="1"/>
</dbReference>
<dbReference type="InterPro" id="IPR002128">
    <property type="entry name" value="NADH_UbQ_OxRdtase_chlpt_su5_C"/>
</dbReference>
<dbReference type="InterPro" id="IPR018393">
    <property type="entry name" value="NADHpl_OxRdtase_5_subgr"/>
</dbReference>
<dbReference type="InterPro" id="IPR001750">
    <property type="entry name" value="ND/Mrp_TM"/>
</dbReference>
<dbReference type="InterPro" id="IPR003945">
    <property type="entry name" value="NU5C-like"/>
</dbReference>
<dbReference type="InterPro" id="IPR001516">
    <property type="entry name" value="Proton_antipo_N"/>
</dbReference>
<dbReference type="NCBIfam" id="TIGR01974">
    <property type="entry name" value="NDH_I_L"/>
    <property type="match status" value="1"/>
</dbReference>
<dbReference type="NCBIfam" id="NF005141">
    <property type="entry name" value="PRK06590.1"/>
    <property type="match status" value="1"/>
</dbReference>
<dbReference type="PANTHER" id="PTHR42829">
    <property type="entry name" value="NADH-UBIQUINONE OXIDOREDUCTASE CHAIN 5"/>
    <property type="match status" value="1"/>
</dbReference>
<dbReference type="PANTHER" id="PTHR42829:SF2">
    <property type="entry name" value="NADH-UBIQUINONE OXIDOREDUCTASE CHAIN 5"/>
    <property type="match status" value="1"/>
</dbReference>
<dbReference type="Pfam" id="PF01010">
    <property type="entry name" value="Proton_antipo_C"/>
    <property type="match status" value="1"/>
</dbReference>
<dbReference type="Pfam" id="PF00361">
    <property type="entry name" value="Proton_antipo_M"/>
    <property type="match status" value="1"/>
</dbReference>
<dbReference type="Pfam" id="PF00662">
    <property type="entry name" value="Proton_antipo_N"/>
    <property type="match status" value="1"/>
</dbReference>
<dbReference type="PRINTS" id="PR01434">
    <property type="entry name" value="NADHDHGNASE5"/>
</dbReference>
<dbReference type="PRINTS" id="PR01435">
    <property type="entry name" value="NPOXDRDTASE5"/>
</dbReference>
<protein>
    <recommendedName>
        <fullName>NAD(P)H-quinone oxidoreductase subunit 5, chloroplastic</fullName>
        <ecNumber>7.1.1.-</ecNumber>
    </recommendedName>
    <alternativeName>
        <fullName>NAD(P)H dehydrogenase subunit 5</fullName>
    </alternativeName>
    <alternativeName>
        <fullName>NADH-plastoquinone oxidoreductase subunit 5</fullName>
    </alternativeName>
</protein>
<organism>
    <name type="scientific">Morus indica</name>
    <name type="common">Mulberry</name>
    <dbReference type="NCBI Taxonomy" id="248361"/>
    <lineage>
        <taxon>Eukaryota</taxon>
        <taxon>Viridiplantae</taxon>
        <taxon>Streptophyta</taxon>
        <taxon>Embryophyta</taxon>
        <taxon>Tracheophyta</taxon>
        <taxon>Spermatophyta</taxon>
        <taxon>Magnoliopsida</taxon>
        <taxon>eudicotyledons</taxon>
        <taxon>Gunneridae</taxon>
        <taxon>Pentapetalae</taxon>
        <taxon>rosids</taxon>
        <taxon>fabids</taxon>
        <taxon>Rosales</taxon>
        <taxon>Moraceae</taxon>
        <taxon>Moreae</taxon>
        <taxon>Morus</taxon>
    </lineage>
</organism>
<geneLocation type="chloroplast"/>
<reference key="1">
    <citation type="submission" date="2005-09" db="EMBL/GenBank/DDBJ databases">
        <title>The chloroplast genome of mulberry: structural features and comparative analysis.</title>
        <authorList>
            <person name="Ravi V."/>
            <person name="Khurana J.P."/>
            <person name="Tyagi A.K."/>
            <person name="Khurana P."/>
        </authorList>
    </citation>
    <scope>NUCLEOTIDE SEQUENCE [LARGE SCALE GENOMIC DNA]</scope>
    <source>
        <strain>cv. K2</strain>
    </source>
</reference>
<comment type="function">
    <text evidence="1">NDH shuttles electrons from NAD(P)H:plastoquinone, via FMN and iron-sulfur (Fe-S) centers, to quinones in the photosynthetic chain and possibly in a chloroplast respiratory chain. The immediate electron acceptor for the enzyme in this species is believed to be plastoquinone. Couples the redox reaction to proton translocation, and thus conserves the redox energy in a proton gradient (By similarity).</text>
</comment>
<comment type="catalytic activity">
    <reaction>
        <text>a plastoquinone + NADH + (n+1) H(+)(in) = a plastoquinol + NAD(+) + n H(+)(out)</text>
        <dbReference type="Rhea" id="RHEA:42608"/>
        <dbReference type="Rhea" id="RHEA-COMP:9561"/>
        <dbReference type="Rhea" id="RHEA-COMP:9562"/>
        <dbReference type="ChEBI" id="CHEBI:15378"/>
        <dbReference type="ChEBI" id="CHEBI:17757"/>
        <dbReference type="ChEBI" id="CHEBI:57540"/>
        <dbReference type="ChEBI" id="CHEBI:57945"/>
        <dbReference type="ChEBI" id="CHEBI:62192"/>
    </reaction>
</comment>
<comment type="catalytic activity">
    <reaction>
        <text>a plastoquinone + NADPH + (n+1) H(+)(in) = a plastoquinol + NADP(+) + n H(+)(out)</text>
        <dbReference type="Rhea" id="RHEA:42612"/>
        <dbReference type="Rhea" id="RHEA-COMP:9561"/>
        <dbReference type="Rhea" id="RHEA-COMP:9562"/>
        <dbReference type="ChEBI" id="CHEBI:15378"/>
        <dbReference type="ChEBI" id="CHEBI:17757"/>
        <dbReference type="ChEBI" id="CHEBI:57783"/>
        <dbReference type="ChEBI" id="CHEBI:58349"/>
        <dbReference type="ChEBI" id="CHEBI:62192"/>
    </reaction>
</comment>
<comment type="subunit">
    <text evidence="1">NDH is composed of at least 16 different subunits, 5 of which are encoded in the nucleus.</text>
</comment>
<comment type="subcellular location">
    <subcellularLocation>
        <location evidence="1">Plastid</location>
        <location evidence="1">Chloroplast thylakoid membrane</location>
        <topology evidence="1">Multi-pass membrane protein</topology>
    </subcellularLocation>
</comment>
<comment type="similarity">
    <text evidence="3">Belongs to the complex I subunit 5 family.</text>
</comment>
<gene>
    <name type="primary">ndhF</name>
    <name type="ordered locus">MoinCp068</name>
</gene>
<accession>Q09WX1</accession>